<reference evidence="8" key="1">
    <citation type="journal article" date="2002" name="Nature">
        <title>Genome sequence of the human malaria parasite Plasmodium falciparum.</title>
        <authorList>
            <person name="Gardner M.J."/>
            <person name="Hall N."/>
            <person name="Fung E."/>
            <person name="White O."/>
            <person name="Berriman M."/>
            <person name="Hyman R.W."/>
            <person name="Carlton J.M."/>
            <person name="Pain A."/>
            <person name="Nelson K.E."/>
            <person name="Bowman S."/>
            <person name="Paulsen I.T."/>
            <person name="James K.D."/>
            <person name="Eisen J.A."/>
            <person name="Rutherford K.M."/>
            <person name="Salzberg S.L."/>
            <person name="Craig A."/>
            <person name="Kyes S."/>
            <person name="Chan M.-S."/>
            <person name="Nene V."/>
            <person name="Shallom S.J."/>
            <person name="Suh B."/>
            <person name="Peterson J."/>
            <person name="Angiuoli S."/>
            <person name="Pertea M."/>
            <person name="Allen J."/>
            <person name="Selengut J."/>
            <person name="Haft D."/>
            <person name="Mather M.W."/>
            <person name="Vaidya A.B."/>
            <person name="Martin D.M.A."/>
            <person name="Fairlamb A.H."/>
            <person name="Fraunholz M.J."/>
            <person name="Roos D.S."/>
            <person name="Ralph S.A."/>
            <person name="McFadden G.I."/>
            <person name="Cummings L.M."/>
            <person name="Subramanian G.M."/>
            <person name="Mungall C."/>
            <person name="Venter J.C."/>
            <person name="Carucci D.J."/>
            <person name="Hoffman S.L."/>
            <person name="Newbold C."/>
            <person name="Davis R.W."/>
            <person name="Fraser C.M."/>
            <person name="Barrell B.G."/>
        </authorList>
    </citation>
    <scope>NUCLEOTIDE SEQUENCE [LARGE SCALE GENOMIC DNA]</scope>
    <source>
        <strain evidence="8">3D7</strain>
    </source>
</reference>
<reference evidence="8" key="2">
    <citation type="journal article" date="2002" name="Nature">
        <title>Sequence of Plasmodium falciparum chromosomes 1, 3-9 and 13.</title>
        <authorList>
            <person name="Hall N."/>
            <person name="Pain A."/>
            <person name="Berriman M."/>
            <person name="Churcher C.M."/>
            <person name="Harris B."/>
            <person name="Harris D."/>
            <person name="Mungall K.L."/>
            <person name="Bowman S."/>
            <person name="Atkin R."/>
            <person name="Baker S."/>
            <person name="Barron A."/>
            <person name="Brooks K."/>
            <person name="Buckee C.O."/>
            <person name="Burrows C."/>
            <person name="Cherevach I."/>
            <person name="Chillingworth C."/>
            <person name="Chillingworth T."/>
            <person name="Christodoulou Z."/>
            <person name="Clark L."/>
            <person name="Clark R."/>
            <person name="Corton C."/>
            <person name="Cronin A."/>
            <person name="Davies R.M."/>
            <person name="Davis P."/>
            <person name="Dear P."/>
            <person name="Dearden F."/>
            <person name="Doggett J."/>
            <person name="Feltwell T."/>
            <person name="Goble A."/>
            <person name="Goodhead I."/>
            <person name="Gwilliam R."/>
            <person name="Hamlin N."/>
            <person name="Hance Z."/>
            <person name="Harper D."/>
            <person name="Hauser H."/>
            <person name="Hornsby T."/>
            <person name="Holroyd S."/>
            <person name="Horrocks P."/>
            <person name="Humphray S."/>
            <person name="Jagels K."/>
            <person name="James K.D."/>
            <person name="Johnson D."/>
            <person name="Kerhornou A."/>
            <person name="Knights A."/>
            <person name="Konfortov B."/>
            <person name="Kyes S."/>
            <person name="Larke N."/>
            <person name="Lawson D."/>
            <person name="Lennard N."/>
            <person name="Line A."/>
            <person name="Maddison M."/>
            <person name="Mclean J."/>
            <person name="Mooney P."/>
            <person name="Moule S."/>
            <person name="Murphy L."/>
            <person name="Oliver K."/>
            <person name="Ormond D."/>
            <person name="Price C."/>
            <person name="Quail M.A."/>
            <person name="Rabbinowitsch E."/>
            <person name="Rajandream M.A."/>
            <person name="Rutter S."/>
            <person name="Rutherford K.M."/>
            <person name="Sanders M."/>
            <person name="Simmonds M."/>
            <person name="Seeger K."/>
            <person name="Sharp S."/>
            <person name="Smith R."/>
            <person name="Squares R."/>
            <person name="Squares S."/>
            <person name="Stevens K."/>
            <person name="Taylor K."/>
            <person name="Tivey A."/>
            <person name="Unwin L."/>
            <person name="Whitehead S."/>
            <person name="Woodward J.R."/>
            <person name="Sulston J.E."/>
            <person name="Craig A."/>
            <person name="Newbold C."/>
            <person name="Barrell B.G."/>
        </authorList>
    </citation>
    <scope>NUCLEOTIDE SEQUENCE [LARGE SCALE GENOMIC DNA]</scope>
    <source>
        <strain evidence="8">3D7</strain>
    </source>
</reference>
<reference evidence="5" key="3">
    <citation type="journal article" date="2020" name="FEBS J.">
        <title>Plasmodium falciparum Apn1 homolog is a mitochondrial base excision repair protein with restricted enzymatic functions.</title>
        <authorList>
            <person name="Tiwari A."/>
            <person name="Kuldeep J."/>
            <person name="Siddiqi M.I."/>
            <person name="Habib S."/>
        </authorList>
    </citation>
    <scope>FUNCTION</scope>
    <scope>CATALYTIC ACTIVITY</scope>
    <scope>COFACTOR</scope>
    <scope>ACTIVITY REGULATION</scope>
    <scope>BIOPHYSICOCHEMICAL PROPERTIES</scope>
    <scope>SUBCELLULAR LOCATION</scope>
    <scope>DEVELOPMENTAL STAGE</scope>
    <scope>PROTEOLYTIC CLEAVAGE</scope>
    <scope>MUTAGENESIS OF HIS-542 AND GLU-572</scope>
</reference>
<organism evidence="8">
    <name type="scientific">Plasmodium falciparum (isolate 3D7)</name>
    <dbReference type="NCBI Taxonomy" id="36329"/>
    <lineage>
        <taxon>Eukaryota</taxon>
        <taxon>Sar</taxon>
        <taxon>Alveolata</taxon>
        <taxon>Apicomplexa</taxon>
        <taxon>Aconoidasida</taxon>
        <taxon>Haemosporida</taxon>
        <taxon>Plasmodiidae</taxon>
        <taxon>Plasmodium</taxon>
        <taxon>Plasmodium (Laverania)</taxon>
    </lineage>
</organism>
<proteinExistence type="evidence at protein level"/>
<comment type="function">
    <text evidence="3">Plays a role in mitochondrial DNA base excision repair (BER) pathway induced by oxidative stress (PubMed:31386260). Has apurinic/apyrimidinic (AP) endonuclease activity towards double-stranded DNA (dsDNA) with a preference for C as opposite base (PubMed:31386260). Has 3'-phosphatase activity; removes 3'-phosphate from blunt-end, recessed, and gapped DNA templates and thus, removes 3'-blocks for DNA polymerase activity during BER (PubMed:31386260). Lacks 3'-5' exonuclease activity and does not cleave damaged bases by nucleotide incision repair (NIR) (PubMed:31386260).</text>
</comment>
<comment type="cofactor">
    <cofactor evidence="3">
        <name>Zn(2+)</name>
        <dbReference type="ChEBI" id="CHEBI:29105"/>
    </cofactor>
    <cofactor evidence="3">
        <name>Mn(2+)</name>
        <dbReference type="ChEBI" id="CHEBI:29035"/>
    </cofactor>
    <text evidence="3">Binds 2 Zn(2+) and 1 Mn(2+) ions.</text>
</comment>
<comment type="activity regulation">
    <text evidence="3">Apurinic/apyrimidinic (AP) endonuclease activity is enhanced with increasing concentrations of Mn(2+), while Zn(2+) initially enhances activity but subsequently inhibits activity in a concentration-dependent manner (PubMed:31386260). Co(2+) inhibits apurinic/apyrimidinic (AP) endonuclease activity at concentrations greater than 2.5 mM (PubMed:31386260).</text>
</comment>
<comment type="biophysicochemical properties">
    <kinetics>
        <KM evidence="3">3.1 uM for THF-C (5'-FAM-labeled 40-bp DNA with a tetrahydrofuranyl residue (THF) as a synthetic abasic site at the 26th position with C as opposite base) (at pH 8.5 and 37 degrees Celsius)</KM>
        <text evidence="3">kcat is 17.2 sec(-1) with THF-C (5'-FAM-labeled 40-bp DNA with a tetrahydrofuranyl residue (THF) as a synthetic abasic site at the 26th position with C as opposite base) (at pH 8.5 and 37 degrees Celsius).</text>
    </kinetics>
</comment>
<comment type="subcellular location">
    <subcellularLocation>
        <location evidence="3">Mitochondrion</location>
    </subcellularLocation>
</comment>
<comment type="developmental stage">
    <text evidence="3">Expressed during the asexual blood stage (at protein level).</text>
</comment>
<comment type="PTM">
    <text evidence="3">May be proteolytically cleaved into a 59 kDa form.</text>
</comment>
<comment type="similarity">
    <text evidence="5">Belongs to the AP endonuclease 2 family.</text>
</comment>
<evidence type="ECO:0000255" key="1">
    <source>
        <dbReference type="PROSITE-ProRule" id="PRU00763"/>
    </source>
</evidence>
<evidence type="ECO:0000256" key="2">
    <source>
        <dbReference type="SAM" id="MobiDB-lite"/>
    </source>
</evidence>
<evidence type="ECO:0000269" key="3">
    <source>
    </source>
</evidence>
<evidence type="ECO:0000303" key="4">
    <source>
    </source>
</evidence>
<evidence type="ECO:0000305" key="5"/>
<evidence type="ECO:0000305" key="6">
    <source>
    </source>
</evidence>
<evidence type="ECO:0000312" key="7">
    <source>
        <dbReference type="EMBL" id="CAD52465.1"/>
    </source>
</evidence>
<evidence type="ECO:0000312" key="8">
    <source>
        <dbReference type="Proteomes" id="UP000001450"/>
    </source>
</evidence>
<accession>Q8IE02</accession>
<protein>
    <recommendedName>
        <fullName evidence="4">Apurinic-apyrimidinic endonuclease 1</fullName>
        <shortName evidence="4">PfApn1</shortName>
        <ecNumber evidence="3">3.1.21.-</ecNumber>
    </recommendedName>
</protein>
<name>APN1_PLAF7</name>
<gene>
    <name evidence="4" type="primary">APN1</name>
    <name evidence="7" type="ORF">PF3D7_1332600</name>
</gene>
<keyword id="KW-0227">DNA damage</keyword>
<keyword id="KW-0234">DNA repair</keyword>
<keyword id="KW-0255">Endonuclease</keyword>
<keyword id="KW-0378">Hydrolase</keyword>
<keyword id="KW-0464">Manganese</keyword>
<keyword id="KW-0479">Metal-binding</keyword>
<keyword id="KW-0496">Mitochondrion</keyword>
<keyword id="KW-0540">Nuclease</keyword>
<keyword id="KW-1185">Reference proteome</keyword>
<keyword id="KW-0809">Transit peptide</keyword>
<keyword id="KW-0862">Zinc</keyword>
<feature type="transit peptide" description="Mitochondrion" evidence="6">
    <location>
        <begin position="1"/>
        <end status="unknown"/>
    </location>
</feature>
<feature type="chain" id="PRO_0000456880" description="Apurinic-apyrimidinic endonuclease 1">
    <location>
        <begin status="unknown"/>
        <end position="597"/>
    </location>
</feature>
<feature type="region of interest" description="Disordered" evidence="2">
    <location>
        <begin position="232"/>
        <end position="296"/>
    </location>
</feature>
<feature type="compositionally biased region" description="Polar residues" evidence="2">
    <location>
        <begin position="232"/>
        <end position="246"/>
    </location>
</feature>
<feature type="compositionally biased region" description="Low complexity" evidence="2">
    <location>
        <begin position="265"/>
        <end position="274"/>
    </location>
</feature>
<feature type="binding site" evidence="1">
    <location>
        <position position="380"/>
    </location>
    <ligand>
        <name>Zn(2+)</name>
        <dbReference type="ChEBI" id="CHEBI:29105"/>
        <label>1</label>
    </ligand>
</feature>
<feature type="binding site" evidence="1">
    <location>
        <position position="420"/>
    </location>
    <ligand>
        <name>Zn(2+)</name>
        <dbReference type="ChEBI" id="CHEBI:29105"/>
        <label>1</label>
    </ligand>
</feature>
<feature type="binding site" evidence="1">
    <location>
        <position position="456"/>
    </location>
    <ligand>
        <name>Zn(2+)</name>
        <dbReference type="ChEBI" id="CHEBI:29105"/>
        <label>1</label>
    </ligand>
</feature>
<feature type="binding site" evidence="1">
    <location>
        <position position="456"/>
    </location>
    <ligand>
        <name>Zn(2+)</name>
        <dbReference type="ChEBI" id="CHEBI:29105"/>
        <label>2</label>
    </ligand>
</feature>
<feature type="binding site" evidence="1">
    <location>
        <position position="490"/>
    </location>
    <ligand>
        <name>Zn(2+)</name>
        <dbReference type="ChEBI" id="CHEBI:29105"/>
        <label>2</label>
    </ligand>
</feature>
<feature type="binding site" evidence="6">
    <location>
        <position position="493"/>
    </location>
    <ligand>
        <name>Mn(2+)</name>
        <dbReference type="ChEBI" id="CHEBI:29035"/>
    </ligand>
</feature>
<feature type="binding site" evidence="1">
    <location>
        <position position="493"/>
    </location>
    <ligand>
        <name>Zn(2+)</name>
        <dbReference type="ChEBI" id="CHEBI:29105"/>
        <label>3</label>
    </ligand>
</feature>
<feature type="binding site" evidence="1">
    <location>
        <position position="527"/>
    </location>
    <ligand>
        <name>Zn(2+)</name>
        <dbReference type="ChEBI" id="CHEBI:29105"/>
        <label>2</label>
    </ligand>
</feature>
<feature type="binding site" evidence="6">
    <location>
        <position position="540"/>
    </location>
    <ligand>
        <name>Mn(2+)</name>
        <dbReference type="ChEBI" id="CHEBI:29035"/>
    </ligand>
</feature>
<feature type="binding site" evidence="1">
    <location>
        <position position="540"/>
    </location>
    <ligand>
        <name>Zn(2+)</name>
        <dbReference type="ChEBI" id="CHEBI:29105"/>
        <label>3</label>
    </ligand>
</feature>
<feature type="binding site" evidence="3">
    <location>
        <position position="542"/>
    </location>
    <ligand>
        <name>Mn(2+)</name>
        <dbReference type="ChEBI" id="CHEBI:29035"/>
    </ligand>
</feature>
<feature type="binding site" evidence="1">
    <location>
        <position position="542"/>
    </location>
    <ligand>
        <name>Zn(2+)</name>
        <dbReference type="ChEBI" id="CHEBI:29105"/>
        <label>3</label>
    </ligand>
</feature>
<feature type="binding site" evidence="1">
    <location>
        <position position="572"/>
    </location>
    <ligand>
        <name>Zn(2+)</name>
        <dbReference type="ChEBI" id="CHEBI:29105"/>
        <label>2</label>
    </ligand>
</feature>
<feature type="mutagenesis site" description="Loss of apurinic/apyrimidinic (AP) endonuclease activity. Loss of Mn(2+) binding. Impairs DNA binding." evidence="3">
    <original>H</original>
    <variation>N</variation>
    <location>
        <position position="542"/>
    </location>
</feature>
<feature type="mutagenesis site" description="Loss of apurinic/apyrimidinic (AP) endonuclease activity." evidence="3">
    <original>E</original>
    <variation>Q</variation>
    <location>
        <position position="572"/>
    </location>
</feature>
<dbReference type="EC" id="3.1.21.-" evidence="3"/>
<dbReference type="EMBL" id="AL844509">
    <property type="protein sequence ID" value="CAD52465.1"/>
    <property type="molecule type" value="Genomic_DNA"/>
</dbReference>
<dbReference type="RefSeq" id="XP_001350057.1">
    <property type="nucleotide sequence ID" value="XM_001350021.1"/>
</dbReference>
<dbReference type="SMR" id="Q8IE02"/>
<dbReference type="FunCoup" id="Q8IE02">
    <property type="interactions" value="18"/>
</dbReference>
<dbReference type="STRING" id="36329.Q8IE02"/>
<dbReference type="SwissPalm" id="Q8IE02"/>
<dbReference type="PaxDb" id="5833-PF13_0176"/>
<dbReference type="EnsemblProtists" id="CAD52465">
    <property type="protein sequence ID" value="CAD52465"/>
    <property type="gene ID" value="PF3D7_1332600"/>
</dbReference>
<dbReference type="GeneID" id="814146"/>
<dbReference type="KEGG" id="pfa:PF3D7_1332600"/>
<dbReference type="VEuPathDB" id="PlasmoDB:PF3D7_1332600"/>
<dbReference type="HOGENOM" id="CLU_025885_0_0_1"/>
<dbReference type="InParanoid" id="Q8IE02"/>
<dbReference type="OMA" id="NTEDRWN"/>
<dbReference type="OrthoDB" id="7663182at2759"/>
<dbReference type="PhylomeDB" id="Q8IE02"/>
<dbReference type="Proteomes" id="UP000001450">
    <property type="component" value="Chromosome 13"/>
</dbReference>
<dbReference type="GO" id="GO:0005739">
    <property type="term" value="C:mitochondrion"/>
    <property type="evidence" value="ECO:0000314"/>
    <property type="project" value="UniProtKB"/>
</dbReference>
<dbReference type="GO" id="GO:0005634">
    <property type="term" value="C:nucleus"/>
    <property type="evidence" value="ECO:0000318"/>
    <property type="project" value="GO_Central"/>
</dbReference>
<dbReference type="GO" id="GO:0140078">
    <property type="term" value="F:class I DNA-(apurinic or apyrimidinic site) endonuclease activity"/>
    <property type="evidence" value="ECO:0007669"/>
    <property type="project" value="UniProtKB-EC"/>
</dbReference>
<dbReference type="GO" id="GO:0003677">
    <property type="term" value="F:DNA binding"/>
    <property type="evidence" value="ECO:0000315"/>
    <property type="project" value="UniProtKB"/>
</dbReference>
<dbReference type="GO" id="GO:0003906">
    <property type="term" value="F:DNA-(apurinic or apyrimidinic site) endonuclease activity"/>
    <property type="evidence" value="ECO:0000314"/>
    <property type="project" value="UniProtKB"/>
</dbReference>
<dbReference type="GO" id="GO:0004519">
    <property type="term" value="F:endonuclease activity"/>
    <property type="evidence" value="ECO:0007669"/>
    <property type="project" value="UniProtKB-KW"/>
</dbReference>
<dbReference type="GO" id="GO:0030145">
    <property type="term" value="F:manganese ion binding"/>
    <property type="evidence" value="ECO:0000315"/>
    <property type="project" value="UniProtKB"/>
</dbReference>
<dbReference type="GO" id="GO:0008081">
    <property type="term" value="F:phosphoric diester hydrolase activity"/>
    <property type="evidence" value="ECO:0000314"/>
    <property type="project" value="UniProtKB"/>
</dbReference>
<dbReference type="GO" id="GO:0008270">
    <property type="term" value="F:zinc ion binding"/>
    <property type="evidence" value="ECO:0000314"/>
    <property type="project" value="UniProtKB"/>
</dbReference>
<dbReference type="GO" id="GO:0006284">
    <property type="term" value="P:base-excision repair"/>
    <property type="evidence" value="ECO:0000314"/>
    <property type="project" value="UniProtKB"/>
</dbReference>
<dbReference type="CDD" id="cd00019">
    <property type="entry name" value="AP2Ec"/>
    <property type="match status" value="1"/>
</dbReference>
<dbReference type="FunFam" id="3.20.20.150:FF:000001">
    <property type="entry name" value="Probable endonuclease 4"/>
    <property type="match status" value="1"/>
</dbReference>
<dbReference type="Gene3D" id="3.20.20.150">
    <property type="entry name" value="Divalent-metal-dependent TIM barrel enzymes"/>
    <property type="match status" value="1"/>
</dbReference>
<dbReference type="HAMAP" id="MF_00152">
    <property type="entry name" value="Nfo"/>
    <property type="match status" value="1"/>
</dbReference>
<dbReference type="InterPro" id="IPR001719">
    <property type="entry name" value="AP_endonuc_2"/>
</dbReference>
<dbReference type="InterPro" id="IPR018246">
    <property type="entry name" value="AP_endonuc_F2_Zn_BS"/>
</dbReference>
<dbReference type="InterPro" id="IPR036237">
    <property type="entry name" value="Xyl_isomerase-like_sf"/>
</dbReference>
<dbReference type="InterPro" id="IPR013022">
    <property type="entry name" value="Xyl_isomerase-like_TIM-brl"/>
</dbReference>
<dbReference type="NCBIfam" id="TIGR00587">
    <property type="entry name" value="nfo"/>
    <property type="match status" value="1"/>
</dbReference>
<dbReference type="NCBIfam" id="NF002199">
    <property type="entry name" value="PRK01060.1-4"/>
    <property type="match status" value="1"/>
</dbReference>
<dbReference type="PANTHER" id="PTHR21445:SF0">
    <property type="entry name" value="APURINIC-APYRIMIDINIC ENDONUCLEASE"/>
    <property type="match status" value="1"/>
</dbReference>
<dbReference type="PANTHER" id="PTHR21445">
    <property type="entry name" value="ENDONUCLEASE IV ENDODEOXYRIBONUCLEASE IV"/>
    <property type="match status" value="1"/>
</dbReference>
<dbReference type="Pfam" id="PF01261">
    <property type="entry name" value="AP_endonuc_2"/>
    <property type="match status" value="1"/>
</dbReference>
<dbReference type="SMART" id="SM00518">
    <property type="entry name" value="AP2Ec"/>
    <property type="match status" value="1"/>
</dbReference>
<dbReference type="SUPFAM" id="SSF51658">
    <property type="entry name" value="Xylose isomerase-like"/>
    <property type="match status" value="1"/>
</dbReference>
<dbReference type="PROSITE" id="PS00729">
    <property type="entry name" value="AP_NUCLEASE_F2_1"/>
    <property type="match status" value="1"/>
</dbReference>
<dbReference type="PROSITE" id="PS00730">
    <property type="entry name" value="AP_NUCLEASE_F2_2"/>
    <property type="match status" value="1"/>
</dbReference>
<dbReference type="PROSITE" id="PS00731">
    <property type="entry name" value="AP_NUCLEASE_F2_3"/>
    <property type="match status" value="1"/>
</dbReference>
<dbReference type="PROSITE" id="PS51432">
    <property type="entry name" value="AP_NUCLEASE_F2_4"/>
    <property type="match status" value="1"/>
</dbReference>
<sequence>MFFSFYHSSFSSLSSFFFSFFSLLLYMLVLLQIFPKNYYEAGTLSIRVIRKNTFNHSYNNIKNIHYIHCGYPNIFNNCRNYYMNNFYNNNLSAPFKNKNNYMHIFFKIVEGNKKKKREHPFFKYLFHMNMLEKSGDKKNTVISKITESCQYGDIRKYMNMKKESLEEGEKNKSGEEYNKHVEQNNIKDEKIHFKDGTFIKSKEEEIENEKGGTICLKKEIQKNVLEINNNTYNNDTKYLSNPKGVTNKSKQSKKEIEKKKKKKNNNNNNNNNNKIKSEKSANDTKNIPPIPKNTEDRWNDYNKIKEYAKISNVYLGAHISASGGVQNAPINSFNISGLAFALFLKNQRKWESAALTNENIKQFEENCKKYNFDKNFILPHGSYLINLANPDKEKRDKSYLSFLDDIKRCEQLNIKLYNFHPGSTVGQCTVDEGIKNVADCINKVHKETNNVIIVLENSAGQKNSVGSKFEHLRDIINLVHDKDRIGVCLDTCHTFAAGYNIKTFENFDNVMKQFDDIVNVKYLKAVHLNDSKSDIGSGLDRHENIGKGKLTMDTFKYIMKSKYFKNIPIILETPDITNDESIYKYEIQNLYKLYFEK</sequence>